<dbReference type="EC" id="2.7.7.6" evidence="1"/>
<dbReference type="EMBL" id="AE004439">
    <property type="protein sequence ID" value="AAK03821.1"/>
    <property type="molecule type" value="Genomic_DNA"/>
</dbReference>
<dbReference type="RefSeq" id="WP_010907308.1">
    <property type="nucleotide sequence ID" value="NC_002663.1"/>
</dbReference>
<dbReference type="SMR" id="Q9CK91"/>
<dbReference type="STRING" id="272843.PM1737"/>
<dbReference type="EnsemblBacteria" id="AAK03821">
    <property type="protein sequence ID" value="AAK03821"/>
    <property type="gene ID" value="PM1737"/>
</dbReference>
<dbReference type="KEGG" id="pmu:PM1737"/>
<dbReference type="PATRIC" id="fig|272843.6.peg.1759"/>
<dbReference type="HOGENOM" id="CLU_000524_4_0_6"/>
<dbReference type="OrthoDB" id="9803954at2"/>
<dbReference type="Proteomes" id="UP000000809">
    <property type="component" value="Chromosome"/>
</dbReference>
<dbReference type="GO" id="GO:0000428">
    <property type="term" value="C:DNA-directed RNA polymerase complex"/>
    <property type="evidence" value="ECO:0007669"/>
    <property type="project" value="UniProtKB-KW"/>
</dbReference>
<dbReference type="GO" id="GO:0003677">
    <property type="term" value="F:DNA binding"/>
    <property type="evidence" value="ECO:0007669"/>
    <property type="project" value="UniProtKB-UniRule"/>
</dbReference>
<dbReference type="GO" id="GO:0003899">
    <property type="term" value="F:DNA-directed RNA polymerase activity"/>
    <property type="evidence" value="ECO:0007669"/>
    <property type="project" value="UniProtKB-UniRule"/>
</dbReference>
<dbReference type="GO" id="GO:0032549">
    <property type="term" value="F:ribonucleoside binding"/>
    <property type="evidence" value="ECO:0007669"/>
    <property type="project" value="InterPro"/>
</dbReference>
<dbReference type="GO" id="GO:0006351">
    <property type="term" value="P:DNA-templated transcription"/>
    <property type="evidence" value="ECO:0007669"/>
    <property type="project" value="UniProtKB-UniRule"/>
</dbReference>
<dbReference type="CDD" id="cd00653">
    <property type="entry name" value="RNA_pol_B_RPB2"/>
    <property type="match status" value="1"/>
</dbReference>
<dbReference type="FunFam" id="2.40.270.10:FF:000003">
    <property type="entry name" value="DNA-directed RNA polymerase subunit beta"/>
    <property type="match status" value="1"/>
</dbReference>
<dbReference type="FunFam" id="2.40.270.10:FF:000004">
    <property type="entry name" value="DNA-directed RNA polymerase subunit beta"/>
    <property type="match status" value="1"/>
</dbReference>
<dbReference type="FunFam" id="2.40.50.100:FF:000006">
    <property type="entry name" value="DNA-directed RNA polymerase subunit beta"/>
    <property type="match status" value="1"/>
</dbReference>
<dbReference type="FunFam" id="2.40.50.150:FF:000001">
    <property type="entry name" value="DNA-directed RNA polymerase subunit beta"/>
    <property type="match status" value="1"/>
</dbReference>
<dbReference type="FunFam" id="3.90.1100.10:FF:000002">
    <property type="entry name" value="DNA-directed RNA polymerase subunit beta"/>
    <property type="match status" value="1"/>
</dbReference>
<dbReference type="FunFam" id="3.90.1110.10:FF:000001">
    <property type="entry name" value="DNA-directed RNA polymerase subunit beta"/>
    <property type="match status" value="1"/>
</dbReference>
<dbReference type="FunFam" id="3.90.1110.10:FF:000004">
    <property type="entry name" value="DNA-directed RNA polymerase subunit beta"/>
    <property type="match status" value="1"/>
</dbReference>
<dbReference type="FunFam" id="3.90.1800.10:FF:000001">
    <property type="entry name" value="DNA-directed RNA polymerase subunit beta"/>
    <property type="match status" value="1"/>
</dbReference>
<dbReference type="Gene3D" id="2.40.50.100">
    <property type="match status" value="1"/>
</dbReference>
<dbReference type="Gene3D" id="2.40.50.150">
    <property type="match status" value="1"/>
</dbReference>
<dbReference type="Gene3D" id="3.90.1100.10">
    <property type="match status" value="3"/>
</dbReference>
<dbReference type="Gene3D" id="6.10.140.1670">
    <property type="match status" value="1"/>
</dbReference>
<dbReference type="Gene3D" id="2.40.270.10">
    <property type="entry name" value="DNA-directed RNA polymerase, subunit 2, domain 6"/>
    <property type="match status" value="1"/>
</dbReference>
<dbReference type="Gene3D" id="3.90.1800.10">
    <property type="entry name" value="RNA polymerase alpha subunit dimerisation domain"/>
    <property type="match status" value="1"/>
</dbReference>
<dbReference type="HAMAP" id="MF_01321">
    <property type="entry name" value="RNApol_bact_RpoB"/>
    <property type="match status" value="1"/>
</dbReference>
<dbReference type="InterPro" id="IPR019462">
    <property type="entry name" value="DNA-dir_RNA_pol_bsu_external_1"/>
</dbReference>
<dbReference type="InterPro" id="IPR015712">
    <property type="entry name" value="DNA-dir_RNA_pol_su2"/>
</dbReference>
<dbReference type="InterPro" id="IPR007120">
    <property type="entry name" value="DNA-dir_RNAP_su2_dom"/>
</dbReference>
<dbReference type="InterPro" id="IPR037033">
    <property type="entry name" value="DNA-dir_RNAP_su2_hyb_sf"/>
</dbReference>
<dbReference type="InterPro" id="IPR010243">
    <property type="entry name" value="RNA_pol_bsu_bac"/>
</dbReference>
<dbReference type="InterPro" id="IPR007121">
    <property type="entry name" value="RNA_pol_bsu_CS"/>
</dbReference>
<dbReference type="InterPro" id="IPR007644">
    <property type="entry name" value="RNA_pol_bsu_protrusion"/>
</dbReference>
<dbReference type="InterPro" id="IPR007642">
    <property type="entry name" value="RNA_pol_Rpb2_2"/>
</dbReference>
<dbReference type="InterPro" id="IPR007645">
    <property type="entry name" value="RNA_pol_Rpb2_3"/>
</dbReference>
<dbReference type="InterPro" id="IPR007641">
    <property type="entry name" value="RNA_pol_Rpb2_7"/>
</dbReference>
<dbReference type="InterPro" id="IPR014724">
    <property type="entry name" value="RNA_pol_RPB2_OB-fold"/>
</dbReference>
<dbReference type="NCBIfam" id="NF001616">
    <property type="entry name" value="PRK00405.1"/>
    <property type="match status" value="1"/>
</dbReference>
<dbReference type="NCBIfam" id="TIGR02013">
    <property type="entry name" value="rpoB"/>
    <property type="match status" value="1"/>
</dbReference>
<dbReference type="PANTHER" id="PTHR20856">
    <property type="entry name" value="DNA-DIRECTED RNA POLYMERASE I SUBUNIT 2"/>
    <property type="match status" value="1"/>
</dbReference>
<dbReference type="Pfam" id="PF04563">
    <property type="entry name" value="RNA_pol_Rpb2_1"/>
    <property type="match status" value="1"/>
</dbReference>
<dbReference type="Pfam" id="PF04561">
    <property type="entry name" value="RNA_pol_Rpb2_2"/>
    <property type="match status" value="2"/>
</dbReference>
<dbReference type="Pfam" id="PF04565">
    <property type="entry name" value="RNA_pol_Rpb2_3"/>
    <property type="match status" value="1"/>
</dbReference>
<dbReference type="Pfam" id="PF10385">
    <property type="entry name" value="RNA_pol_Rpb2_45"/>
    <property type="match status" value="1"/>
</dbReference>
<dbReference type="Pfam" id="PF00562">
    <property type="entry name" value="RNA_pol_Rpb2_6"/>
    <property type="match status" value="1"/>
</dbReference>
<dbReference type="Pfam" id="PF04560">
    <property type="entry name" value="RNA_pol_Rpb2_7"/>
    <property type="match status" value="1"/>
</dbReference>
<dbReference type="SUPFAM" id="SSF64484">
    <property type="entry name" value="beta and beta-prime subunits of DNA dependent RNA-polymerase"/>
    <property type="match status" value="1"/>
</dbReference>
<dbReference type="PROSITE" id="PS01166">
    <property type="entry name" value="RNA_POL_BETA"/>
    <property type="match status" value="1"/>
</dbReference>
<comment type="function">
    <text evidence="1">DNA-dependent RNA polymerase catalyzes the transcription of DNA into RNA using the four ribonucleoside triphosphates as substrates.</text>
</comment>
<comment type="catalytic activity">
    <reaction evidence="1">
        <text>RNA(n) + a ribonucleoside 5'-triphosphate = RNA(n+1) + diphosphate</text>
        <dbReference type="Rhea" id="RHEA:21248"/>
        <dbReference type="Rhea" id="RHEA-COMP:14527"/>
        <dbReference type="Rhea" id="RHEA-COMP:17342"/>
        <dbReference type="ChEBI" id="CHEBI:33019"/>
        <dbReference type="ChEBI" id="CHEBI:61557"/>
        <dbReference type="ChEBI" id="CHEBI:140395"/>
        <dbReference type="EC" id="2.7.7.6"/>
    </reaction>
</comment>
<comment type="subunit">
    <text evidence="1">The RNAP catalytic core consists of 2 alpha, 1 beta, 1 beta' and 1 omega subunit. When a sigma factor is associated with the core the holoenzyme is formed, which can initiate transcription.</text>
</comment>
<comment type="similarity">
    <text evidence="1">Belongs to the RNA polymerase beta chain family.</text>
</comment>
<accession>Q9CK91</accession>
<gene>
    <name evidence="1" type="primary">rpoB</name>
    <name type="ordered locus">PM1737</name>
</gene>
<organism>
    <name type="scientific">Pasteurella multocida (strain Pm70)</name>
    <dbReference type="NCBI Taxonomy" id="272843"/>
    <lineage>
        <taxon>Bacteria</taxon>
        <taxon>Pseudomonadati</taxon>
        <taxon>Pseudomonadota</taxon>
        <taxon>Gammaproteobacteria</taxon>
        <taxon>Pasteurellales</taxon>
        <taxon>Pasteurellaceae</taxon>
        <taxon>Pasteurella</taxon>
    </lineage>
</organism>
<protein>
    <recommendedName>
        <fullName evidence="1">DNA-directed RNA polymerase subunit beta</fullName>
        <shortName evidence="1">RNAP subunit beta</shortName>
        <ecNumber evidence="1">2.7.7.6</ecNumber>
    </recommendedName>
    <alternativeName>
        <fullName evidence="1">RNA polymerase subunit beta</fullName>
    </alternativeName>
    <alternativeName>
        <fullName evidence="1">Transcriptase subunit beta</fullName>
    </alternativeName>
</protein>
<proteinExistence type="inferred from homology"/>
<evidence type="ECO:0000255" key="1">
    <source>
        <dbReference type="HAMAP-Rule" id="MF_01321"/>
    </source>
</evidence>
<reference key="1">
    <citation type="journal article" date="2001" name="Proc. Natl. Acad. Sci. U.S.A.">
        <title>Complete genomic sequence of Pasteurella multocida Pm70.</title>
        <authorList>
            <person name="May B.J."/>
            <person name="Zhang Q."/>
            <person name="Li L.L."/>
            <person name="Paustian M.L."/>
            <person name="Whittam T.S."/>
            <person name="Kapur V."/>
        </authorList>
    </citation>
    <scope>NUCLEOTIDE SEQUENCE [LARGE SCALE GENOMIC DNA]</scope>
    <source>
        <strain>Pm70</strain>
    </source>
</reference>
<keyword id="KW-0240">DNA-directed RNA polymerase</keyword>
<keyword id="KW-0548">Nucleotidyltransferase</keyword>
<keyword id="KW-1185">Reference proteome</keyword>
<keyword id="KW-0804">Transcription</keyword>
<keyword id="KW-0808">Transferase</keyword>
<feature type="chain" id="PRO_0000047933" description="DNA-directed RNA polymerase subunit beta">
    <location>
        <begin position="1"/>
        <end position="1342"/>
    </location>
</feature>
<sequence length="1342" mass="149567">MVYSYTEKKRIRKDFGKRPQVLNVPYLLTIQLDSFDKFIQRDPEGQQGLEAAFRSVFPIVSNNGNTELQYVSYQLGEPVFDVRECQIRGTTYAAPLRVKLRLVSYDKDAAPGTIKDIKEQEVYMGEIPLMTDNGTFVINGTERVIVSQLHRSPGVFFDSDKGKTHSSGKVLYNARIIPYRGSWLDFEFDPKDNLYARIDRRRKLPATIILRALNYTTEQILDIFFDKVVFEISNNKLLMTLVPERLRGETATFDIEANGKVYVERGRRITARHIRALEKDQITQVEVPTEYIVGKVAAKDYVDLESGEIVCPANMEISLEMLAKLAQAGYKTIETLFTNDLDYGPYISETLRVDPSNDRLSALVEIYRMMRPGEPPTKEAAEGLFDNLFFSSDRYDLSAVGRMKFNRSLGIDEETGSGILSNDDIIGVMKKLIEIRNGRGEVDDIDHLGNRRIRSVGEMAENQFRIGLVRVERAVKERLSLGDLDAVTPQDLINAKPISAAVKEFFGSSQLSQFMDQNNPLSEVTHKRRISALGPGGLTRERAGFEVRDVHATHYGRVCPIETPEGPNIGLINSLSVYARTNDYGFLETPYRKVVNGQVTEEIEYLSAIEEGKYVIAQANSNLDEELRFTDAFVTCRGEHGESGLYRPDEIHYMDVSTQQVVSVAAALIPFLEHDDANRALMGANMQRQAVPTLRADKPLVGTGIEKAVAVDSGVTVIAKRGGMVQYVDASRIVVKVNEDETIPGEAGIDIYNLVKYTRSNQNTCINQIPCVSLGEPIGRGEVLADGPSTDLGELALGQNMRVAFMPWNGYNFEDSMLVSERVVQEDRFTTIHIQELSCVARDTKLGSEEITADIPNVGEAALSKLDESGIVYIGAEVKGGDILVGKVTPKGETQLTPEEKLLRAIFGEKASDVKDSSLRVPNSVSGTVIDVQVFTRDGVEKDKRALEIEEMQLKQAKKDLVEELEILEAGLFTRVRSLLIAGGFDAKNLDKLDRTKWLEQSLSDEAQQNQLEQLAEQYEELRKEFERKLEVQRGKIIQGDDLAPGVLKVVKVYLAVKRQIQPGDKMAGRHGNKGVISKINPVEDMPYDENGQPVDIVLNPLGVPSRMNIGQILETHLGLAAKGIGDKINAMIKQQQDVAKLREYMQKAYDLGHGSQKVDLSTFSDEEVMRLAQNLRKGLPLATPVFDGAHESEIKGLLELGGLPTSGQITLFDGRTGEKFERPVTVGYMYMLKLNHLVDDKMHARSTGSYSLVTQQPLGGKAQFGGQRFGEMEVWALEAYGAAYTLQEMLTVKSDDVNGRTKMYKNIVGGTHQMDPGTPESFNVIMKEIRSLGINIDLDED</sequence>
<name>RPOB_PASMU</name>